<protein>
    <recommendedName>
        <fullName>Homoserine dehydrogenase</fullName>
        <shortName>HDH</shortName>
        <shortName>HSD</shortName>
        <ecNumber evidence="3">1.1.1.3</ecNumber>
    </recommendedName>
</protein>
<organism>
    <name type="scientific">Pseudomonas aeruginosa (strain ATCC 15692 / DSM 22644 / CIP 104116 / JCM 14847 / LMG 12228 / 1C / PRS 101 / PAO1)</name>
    <dbReference type="NCBI Taxonomy" id="208964"/>
    <lineage>
        <taxon>Bacteria</taxon>
        <taxon>Pseudomonadati</taxon>
        <taxon>Pseudomonadota</taxon>
        <taxon>Gammaproteobacteria</taxon>
        <taxon>Pseudomonadales</taxon>
        <taxon>Pseudomonadaceae</taxon>
        <taxon>Pseudomonas</taxon>
    </lineage>
</organism>
<name>DHOM_PSEAE</name>
<dbReference type="EC" id="1.1.1.3" evidence="3"/>
<dbReference type="EMBL" id="X65033">
    <property type="protein sequence ID" value="CAA46167.1"/>
    <property type="status" value="ALT_FRAME"/>
    <property type="molecule type" value="Genomic_DNA"/>
</dbReference>
<dbReference type="EMBL" id="AE004091">
    <property type="protein sequence ID" value="AAG07123.1"/>
    <property type="molecule type" value="Genomic_DNA"/>
</dbReference>
<dbReference type="PIR" id="H83179">
    <property type="entry name" value="H83179"/>
</dbReference>
<dbReference type="PIR" id="S27979">
    <property type="entry name" value="DEPSHA"/>
</dbReference>
<dbReference type="RefSeq" id="NP_252425.1">
    <property type="nucleotide sequence ID" value="NC_002516.2"/>
</dbReference>
<dbReference type="RefSeq" id="WP_003109642.1">
    <property type="nucleotide sequence ID" value="NZ_QZGE01000001.1"/>
</dbReference>
<dbReference type="SMR" id="P29365"/>
<dbReference type="STRING" id="208964.PA3736"/>
<dbReference type="PaxDb" id="208964-PA3736"/>
<dbReference type="DNASU" id="880337"/>
<dbReference type="GeneID" id="880337"/>
<dbReference type="KEGG" id="pae:PA3736"/>
<dbReference type="PATRIC" id="fig|208964.12.peg.3908"/>
<dbReference type="PseudoCAP" id="PA3736"/>
<dbReference type="HOGENOM" id="CLU_009116_1_0_6"/>
<dbReference type="InParanoid" id="P29365"/>
<dbReference type="OrthoDB" id="9808167at2"/>
<dbReference type="PhylomeDB" id="P29365"/>
<dbReference type="BioCyc" id="PAER208964:G1FZ6-3807-MONOMER"/>
<dbReference type="UniPathway" id="UPA00050">
    <property type="reaction ID" value="UER00063"/>
</dbReference>
<dbReference type="UniPathway" id="UPA00051">
    <property type="reaction ID" value="UER00465"/>
</dbReference>
<dbReference type="Proteomes" id="UP000002438">
    <property type="component" value="Chromosome"/>
</dbReference>
<dbReference type="GO" id="GO:0004412">
    <property type="term" value="F:homoserine dehydrogenase activity"/>
    <property type="evidence" value="ECO:0000314"/>
    <property type="project" value="PseudoCAP"/>
</dbReference>
<dbReference type="GO" id="GO:0046872">
    <property type="term" value="F:metal ion binding"/>
    <property type="evidence" value="ECO:0007669"/>
    <property type="project" value="UniProtKB-KW"/>
</dbReference>
<dbReference type="GO" id="GO:0070403">
    <property type="term" value="F:NAD+ binding"/>
    <property type="evidence" value="ECO:0000250"/>
    <property type="project" value="UniProtKB"/>
</dbReference>
<dbReference type="GO" id="GO:0050661">
    <property type="term" value="F:NADP binding"/>
    <property type="evidence" value="ECO:0007669"/>
    <property type="project" value="InterPro"/>
</dbReference>
<dbReference type="GO" id="GO:0009086">
    <property type="term" value="P:methionine biosynthetic process"/>
    <property type="evidence" value="ECO:0000250"/>
    <property type="project" value="UniProtKB"/>
</dbReference>
<dbReference type="GO" id="GO:0009088">
    <property type="term" value="P:threonine biosynthetic process"/>
    <property type="evidence" value="ECO:0000314"/>
    <property type="project" value="PseudoCAP"/>
</dbReference>
<dbReference type="CDD" id="cd04881">
    <property type="entry name" value="ACT_HSDH-Hom"/>
    <property type="match status" value="1"/>
</dbReference>
<dbReference type="FunFam" id="3.30.360.10:FF:000005">
    <property type="entry name" value="Homoserine dehydrogenase"/>
    <property type="match status" value="1"/>
</dbReference>
<dbReference type="FunFam" id="3.30.70.260:FF:000030">
    <property type="entry name" value="Homoserine dehydrogenase"/>
    <property type="match status" value="1"/>
</dbReference>
<dbReference type="Gene3D" id="3.30.70.260">
    <property type="match status" value="1"/>
</dbReference>
<dbReference type="Gene3D" id="3.30.360.10">
    <property type="entry name" value="Dihydrodipicolinate Reductase, domain 2"/>
    <property type="match status" value="1"/>
</dbReference>
<dbReference type="Gene3D" id="3.40.50.720">
    <property type="entry name" value="NAD(P)-binding Rossmann-like Domain"/>
    <property type="match status" value="1"/>
</dbReference>
<dbReference type="InterPro" id="IPR045865">
    <property type="entry name" value="ACT-like_dom_sf"/>
</dbReference>
<dbReference type="InterPro" id="IPR002912">
    <property type="entry name" value="ACT_dom"/>
</dbReference>
<dbReference type="InterPro" id="IPR005106">
    <property type="entry name" value="Asp/hSer_DH_NAD-bd"/>
</dbReference>
<dbReference type="InterPro" id="IPR016204">
    <property type="entry name" value="HDH"/>
</dbReference>
<dbReference type="InterPro" id="IPR001342">
    <property type="entry name" value="HDH_cat"/>
</dbReference>
<dbReference type="InterPro" id="IPR019811">
    <property type="entry name" value="HDH_CS"/>
</dbReference>
<dbReference type="InterPro" id="IPR036291">
    <property type="entry name" value="NAD(P)-bd_dom_sf"/>
</dbReference>
<dbReference type="NCBIfam" id="NF004976">
    <property type="entry name" value="PRK06349.1"/>
    <property type="match status" value="1"/>
</dbReference>
<dbReference type="PANTHER" id="PTHR43331">
    <property type="entry name" value="HOMOSERINE DEHYDROGENASE"/>
    <property type="match status" value="1"/>
</dbReference>
<dbReference type="PANTHER" id="PTHR43331:SF1">
    <property type="entry name" value="HOMOSERINE DEHYDROGENASE"/>
    <property type="match status" value="1"/>
</dbReference>
<dbReference type="Pfam" id="PF01842">
    <property type="entry name" value="ACT"/>
    <property type="match status" value="1"/>
</dbReference>
<dbReference type="Pfam" id="PF00742">
    <property type="entry name" value="Homoserine_dh"/>
    <property type="match status" value="1"/>
</dbReference>
<dbReference type="Pfam" id="PF03447">
    <property type="entry name" value="NAD_binding_3"/>
    <property type="match status" value="1"/>
</dbReference>
<dbReference type="PIRSF" id="PIRSF000098">
    <property type="entry name" value="Homoser_dehydrog"/>
    <property type="match status" value="1"/>
</dbReference>
<dbReference type="SUPFAM" id="SSF55021">
    <property type="entry name" value="ACT-like"/>
    <property type="match status" value="1"/>
</dbReference>
<dbReference type="SUPFAM" id="SSF55347">
    <property type="entry name" value="Glyceraldehyde-3-phosphate dehydrogenase-like, C-terminal domain"/>
    <property type="match status" value="1"/>
</dbReference>
<dbReference type="SUPFAM" id="SSF51735">
    <property type="entry name" value="NAD(P)-binding Rossmann-fold domains"/>
    <property type="match status" value="1"/>
</dbReference>
<dbReference type="PROSITE" id="PS51671">
    <property type="entry name" value="ACT"/>
    <property type="match status" value="1"/>
</dbReference>
<dbReference type="PROSITE" id="PS01042">
    <property type="entry name" value="HOMOSER_DHGENASE"/>
    <property type="match status" value="1"/>
</dbReference>
<keyword id="KW-0028">Amino-acid biosynthesis</keyword>
<keyword id="KW-0479">Metal-binding</keyword>
<keyword id="KW-0486">Methionine biosynthesis</keyword>
<keyword id="KW-0520">NAD</keyword>
<keyword id="KW-0521">NADP</keyword>
<keyword id="KW-0560">Oxidoreductase</keyword>
<keyword id="KW-1185">Reference proteome</keyword>
<keyword id="KW-0915">Sodium</keyword>
<keyword id="KW-0791">Threonine biosynthesis</keyword>
<reference key="1">
    <citation type="journal article" date="1992" name="Mol. Microbiol.">
        <title>Isolation, organization and expression of the Pseudomonas aeruginosa threonine genes.</title>
        <authorList>
            <person name="Clepet C."/>
            <person name="Borne F."/>
            <person name="Krishnapillai V."/>
            <person name="Baird C."/>
            <person name="Patte J.-C."/>
            <person name="Cami B."/>
        </authorList>
    </citation>
    <scope>NUCLEOTIDE SEQUENCE [GENOMIC DNA]</scope>
    <source>
        <strain>ATCC 15692 / DSM 22644 / CIP 104116 / JCM 14847 / LMG 12228 / 1C / PRS 101 / PAO1</strain>
    </source>
</reference>
<reference key="2">
    <citation type="journal article" date="2000" name="Nature">
        <title>Complete genome sequence of Pseudomonas aeruginosa PAO1, an opportunistic pathogen.</title>
        <authorList>
            <person name="Stover C.K."/>
            <person name="Pham X.-Q.T."/>
            <person name="Erwin A.L."/>
            <person name="Mizoguchi S.D."/>
            <person name="Warrener P."/>
            <person name="Hickey M.J."/>
            <person name="Brinkman F.S.L."/>
            <person name="Hufnagle W.O."/>
            <person name="Kowalik D.J."/>
            <person name="Lagrou M."/>
            <person name="Garber R.L."/>
            <person name="Goltry L."/>
            <person name="Tolentino E."/>
            <person name="Westbrock-Wadman S."/>
            <person name="Yuan Y."/>
            <person name="Brody L.L."/>
            <person name="Coulter S.N."/>
            <person name="Folger K.R."/>
            <person name="Kas A."/>
            <person name="Larbig K."/>
            <person name="Lim R.M."/>
            <person name="Smith K.A."/>
            <person name="Spencer D.H."/>
            <person name="Wong G.K.-S."/>
            <person name="Wu Z."/>
            <person name="Paulsen I.T."/>
            <person name="Reizer J."/>
            <person name="Saier M.H. Jr."/>
            <person name="Hancock R.E.W."/>
            <person name="Lory S."/>
            <person name="Olson M.V."/>
        </authorList>
    </citation>
    <scope>NUCLEOTIDE SEQUENCE [LARGE SCALE GENOMIC DNA]</scope>
    <source>
        <strain>ATCC 15692 / DSM 22644 / CIP 104116 / JCM 14847 / LMG 12228 / 1C / PRS 101 / PAO1</strain>
    </source>
</reference>
<sequence length="434" mass="46224">MKPVKVGICGLGTVGGGTFNVLERNAEEIARRAGRGIEVAQIAARRPNPKCDTGATPITADIFDVACNPEIDVVVELIGGYTLAHELVLKAIENGKHVVTANKALIAVHGNEIFAKAREKGVIVAFEAAVAGGIPVIKAIREGLSANRINWLAGIINGTGNFILSEMREKGRTFPDVLAEAQALGYAEADPTFDVEGIDAAHKLTILASIAFGIPLQFDKAYTEGISKLTSADVNYADALGYRIKHLGVARRTESGFELRVHPTLIPSDRLIANVNGVMNAVMVNGDAVGSTLYYGAGAGMEPTASSVVADLVDVVRAMTSDPENRVPHLAFQPDALSDHPILPIEACESAYYLRIQAKDHPGVLAQVATILSERGINIESIMQKEAEEQDGLVPMILVTHRVIEQRINDAIAALEALEGVSGPVVRIRVEQLN</sequence>
<gene>
    <name type="primary">hom</name>
    <name type="ordered locus">PA3736</name>
</gene>
<evidence type="ECO:0000250" key="1">
    <source>
        <dbReference type="UniProtKB" id="F9VNG5"/>
    </source>
</evidence>
<evidence type="ECO:0000250" key="2">
    <source>
        <dbReference type="UniProtKB" id="O58802"/>
    </source>
</evidence>
<evidence type="ECO:0000250" key="3">
    <source>
        <dbReference type="UniProtKB" id="P31116"/>
    </source>
</evidence>
<evidence type="ECO:0000255" key="4">
    <source>
        <dbReference type="PIRSR" id="PIRSR036497-1"/>
    </source>
</evidence>
<evidence type="ECO:0000255" key="5">
    <source>
        <dbReference type="PROSITE-ProRule" id="PRU01007"/>
    </source>
</evidence>
<evidence type="ECO:0000305" key="6"/>
<comment type="function">
    <text evidence="3">Catalyzes the conversion of L-aspartate-beta-semialdehyde (L-Asa) to L-homoserine (L-Hse), the third step in the biosynthesis of threonine and methionine from aspartate.</text>
</comment>
<comment type="catalytic activity">
    <reaction evidence="3">
        <text>L-homoserine + NADP(+) = L-aspartate 4-semialdehyde + NADPH + H(+)</text>
        <dbReference type="Rhea" id="RHEA:15761"/>
        <dbReference type="ChEBI" id="CHEBI:15378"/>
        <dbReference type="ChEBI" id="CHEBI:57476"/>
        <dbReference type="ChEBI" id="CHEBI:57783"/>
        <dbReference type="ChEBI" id="CHEBI:58349"/>
        <dbReference type="ChEBI" id="CHEBI:537519"/>
        <dbReference type="EC" id="1.1.1.3"/>
    </reaction>
    <physiologicalReaction direction="right-to-left" evidence="3">
        <dbReference type="Rhea" id="RHEA:15763"/>
    </physiologicalReaction>
</comment>
<comment type="catalytic activity">
    <reaction evidence="3">
        <text>L-homoserine + NAD(+) = L-aspartate 4-semialdehyde + NADH + H(+)</text>
        <dbReference type="Rhea" id="RHEA:15757"/>
        <dbReference type="ChEBI" id="CHEBI:15378"/>
        <dbReference type="ChEBI" id="CHEBI:57476"/>
        <dbReference type="ChEBI" id="CHEBI:57540"/>
        <dbReference type="ChEBI" id="CHEBI:57945"/>
        <dbReference type="ChEBI" id="CHEBI:537519"/>
        <dbReference type="EC" id="1.1.1.3"/>
    </reaction>
    <physiologicalReaction direction="right-to-left" evidence="3">
        <dbReference type="Rhea" id="RHEA:15759"/>
    </physiologicalReaction>
</comment>
<comment type="cofactor">
    <cofactor evidence="3">
        <name>a metal cation</name>
        <dbReference type="ChEBI" id="CHEBI:25213"/>
    </cofactor>
    <text evidence="3">A sodium ion is seen in the structure; a metal ion may subtly affect the relative position of the nucleotide-binding region to influence enzyme activity, and could increase the stability of the enzyme.</text>
</comment>
<comment type="activity regulation">
    <text>Feedback inhibition by threonine.</text>
</comment>
<comment type="pathway">
    <text evidence="3">Amino-acid biosynthesis; L-methionine biosynthesis via de novo pathway; L-homoserine from L-aspartate: step 3/3.</text>
</comment>
<comment type="pathway">
    <text evidence="3">Amino-acid biosynthesis; L-threonine biosynthesis; L-threonine from L-aspartate: step 3/5.</text>
</comment>
<comment type="similarity">
    <text evidence="6">Belongs to the homoserine dehydrogenase family.</text>
</comment>
<comment type="sequence caution" evidence="6">
    <conflict type="frameshift">
        <sequence resource="EMBL-CDS" id="CAA46167"/>
    </conflict>
</comment>
<feature type="chain" id="PRO_0000066703" description="Homoserine dehydrogenase">
    <location>
        <begin position="1"/>
        <end position="434"/>
    </location>
</feature>
<feature type="domain" description="ACT" evidence="5">
    <location>
        <begin position="353"/>
        <end position="429"/>
    </location>
</feature>
<feature type="active site" description="Proton donor" evidence="4">
    <location>
        <position position="203"/>
    </location>
</feature>
<feature type="binding site" evidence="2">
    <location>
        <position position="13"/>
    </location>
    <ligand>
        <name>NADPH</name>
        <dbReference type="ChEBI" id="CHEBI:57783"/>
    </ligand>
</feature>
<feature type="binding site" evidence="3">
    <location>
        <position position="14"/>
    </location>
    <ligand>
        <name>NAD(+)</name>
        <dbReference type="ChEBI" id="CHEBI:57540"/>
    </ligand>
</feature>
<feature type="binding site" evidence="1">
    <location>
        <position position="14"/>
    </location>
    <ligand>
        <name>NADP(+)</name>
        <dbReference type="ChEBI" id="CHEBI:58349"/>
    </ligand>
</feature>
<feature type="binding site" evidence="2">
    <location>
        <position position="14"/>
    </location>
    <ligand>
        <name>NADPH</name>
        <dbReference type="ChEBI" id="CHEBI:57783"/>
    </ligand>
</feature>
<feature type="binding site" evidence="3">
    <location>
        <position position="33"/>
    </location>
    <ligand>
        <name>NAD(+)</name>
        <dbReference type="ChEBI" id="CHEBI:57540"/>
    </ligand>
</feature>
<feature type="binding site" evidence="3">
    <location>
        <position position="43"/>
    </location>
    <ligand>
        <name>NAD(+)</name>
        <dbReference type="ChEBI" id="CHEBI:57540"/>
    </ligand>
</feature>
<feature type="binding site" evidence="1">
    <location>
        <position position="45"/>
    </location>
    <ligand>
        <name>NADP(+)</name>
        <dbReference type="ChEBI" id="CHEBI:58349"/>
    </ligand>
</feature>
<feature type="binding site" evidence="2">
    <location>
        <position position="45"/>
    </location>
    <ligand>
        <name>NADPH</name>
        <dbReference type="ChEBI" id="CHEBI:57783"/>
    </ligand>
</feature>
<feature type="binding site" evidence="1">
    <location>
        <position position="46"/>
    </location>
    <ligand>
        <name>NADP(+)</name>
        <dbReference type="ChEBI" id="CHEBI:58349"/>
    </ligand>
</feature>
<feature type="binding site" evidence="1">
    <location>
        <position position="103"/>
    </location>
    <ligand>
        <name>NADP(+)</name>
        <dbReference type="ChEBI" id="CHEBI:58349"/>
    </ligand>
</feature>
<feature type="binding site" evidence="2">
    <location>
        <position position="103"/>
    </location>
    <ligand>
        <name>NADPH</name>
        <dbReference type="ChEBI" id="CHEBI:57783"/>
    </ligand>
</feature>
<feature type="binding site" evidence="3">
    <location>
        <position position="127"/>
    </location>
    <ligand>
        <name>Na(+)</name>
        <dbReference type="ChEBI" id="CHEBI:29101"/>
    </ligand>
</feature>
<feature type="binding site" evidence="3">
    <location>
        <position position="130"/>
    </location>
    <ligand>
        <name>Na(+)</name>
        <dbReference type="ChEBI" id="CHEBI:29101"/>
    </ligand>
</feature>
<feature type="binding site" evidence="3">
    <location>
        <position position="132"/>
    </location>
    <ligand>
        <name>Na(+)</name>
        <dbReference type="ChEBI" id="CHEBI:29101"/>
    </ligand>
</feature>
<feature type="binding site" evidence="3">
    <location>
        <position position="134"/>
    </location>
    <ligand>
        <name>Na(+)</name>
        <dbReference type="ChEBI" id="CHEBI:29101"/>
    </ligand>
</feature>
<feature type="binding site" evidence="1">
    <location>
        <position position="185"/>
    </location>
    <ligand>
        <name>NADP(+)</name>
        <dbReference type="ChEBI" id="CHEBI:58349"/>
    </ligand>
</feature>
<feature type="binding site" evidence="3">
    <location>
        <position position="188"/>
    </location>
    <ligand>
        <name>L-homoserine</name>
        <dbReference type="ChEBI" id="CHEBI:57476"/>
    </ligand>
</feature>
<feature type="binding site" evidence="1">
    <location>
        <position position="188"/>
    </location>
    <ligand>
        <name>NADP(+)</name>
        <dbReference type="ChEBI" id="CHEBI:58349"/>
    </ligand>
</feature>
<feature type="binding site" evidence="3">
    <location>
        <position position="199"/>
    </location>
    <ligand>
        <name>L-homoserine</name>
        <dbReference type="ChEBI" id="CHEBI:57476"/>
    </ligand>
</feature>
<feature type="binding site" evidence="3">
    <location>
        <position position="300"/>
    </location>
    <ligand>
        <name>NAD(+)</name>
        <dbReference type="ChEBI" id="CHEBI:57540"/>
    </ligand>
</feature>
<feature type="binding site" evidence="1">
    <location>
        <position position="300"/>
    </location>
    <ligand>
        <name>NADP(+)</name>
        <dbReference type="ChEBI" id="CHEBI:58349"/>
    </ligand>
</feature>
<feature type="binding site" evidence="2">
    <location>
        <position position="300"/>
    </location>
    <ligand>
        <name>NADPH</name>
        <dbReference type="ChEBI" id="CHEBI:57783"/>
    </ligand>
</feature>
<feature type="sequence conflict" description="In Ref. 1; CAA46167." evidence="6" ref="1">
    <original>YTLAH</original>
    <variation>PPWPI</variation>
    <location>
        <begin position="81"/>
        <end position="85"/>
    </location>
</feature>
<feature type="sequence conflict" description="In Ref. 1; CAA46167." evidence="6" ref="1">
    <original>AEAD</original>
    <variation>GRGRS</variation>
    <location>
        <begin position="187"/>
        <end position="190"/>
    </location>
</feature>
<feature type="sequence conflict" description="In Ref. 1; CAA46167." evidence="6" ref="1">
    <original>H</original>
    <variation>T</variation>
    <location>
        <position position="202"/>
    </location>
</feature>
<feature type="sequence conflict" description="In Ref. 1; CAA46167." evidence="6" ref="1">
    <original>IAFGI</original>
    <variation>MLRH</variation>
    <location>
        <begin position="210"/>
        <end position="214"/>
    </location>
</feature>
<feature type="sequence conflict" description="In Ref. 1; CAA46167." evidence="6" ref="1">
    <original>NG</original>
    <variation>TA</variation>
    <location>
        <begin position="276"/>
        <end position="277"/>
    </location>
</feature>
<feature type="sequence conflict" description="In Ref. 1; CAA46167." evidence="6" ref="1">
    <original>R</original>
    <variation>H</variation>
    <location>
        <position position="402"/>
    </location>
</feature>
<proteinExistence type="inferred from homology"/>
<accession>P29365</accession>